<proteinExistence type="inferred from homology"/>
<evidence type="ECO:0000255" key="1">
    <source>
        <dbReference type="HAMAP-Rule" id="MF_01454"/>
    </source>
</evidence>
<evidence type="ECO:0000255" key="2">
    <source>
        <dbReference type="PROSITE-ProRule" id="PRU01229"/>
    </source>
</evidence>
<evidence type="ECO:0000255" key="3">
    <source>
        <dbReference type="PROSITE-ProRule" id="PRU01231"/>
    </source>
</evidence>
<organism>
    <name type="scientific">Caldanaerobacter subterraneus subsp. tengcongensis (strain DSM 15242 / JCM 11007 / NBRC 100824 / MB4)</name>
    <name type="common">Thermoanaerobacter tengcongensis</name>
    <dbReference type="NCBI Taxonomy" id="273068"/>
    <lineage>
        <taxon>Bacteria</taxon>
        <taxon>Bacillati</taxon>
        <taxon>Bacillota</taxon>
        <taxon>Clostridia</taxon>
        <taxon>Thermoanaerobacterales</taxon>
        <taxon>Thermoanaerobacteraceae</taxon>
        <taxon>Caldanaerobacter</taxon>
    </lineage>
</organism>
<protein>
    <recommendedName>
        <fullName evidence="1">GTPase Obg</fullName>
        <ecNumber evidence="1">3.6.5.-</ecNumber>
    </recommendedName>
    <alternativeName>
        <fullName evidence="1">GTP-binding protein Obg</fullName>
    </alternativeName>
</protein>
<name>OBG_CALS4</name>
<keyword id="KW-0963">Cytoplasm</keyword>
<keyword id="KW-0342">GTP-binding</keyword>
<keyword id="KW-0378">Hydrolase</keyword>
<keyword id="KW-0460">Magnesium</keyword>
<keyword id="KW-0479">Metal-binding</keyword>
<keyword id="KW-0547">Nucleotide-binding</keyword>
<keyword id="KW-1185">Reference proteome</keyword>
<dbReference type="EC" id="3.6.5.-" evidence="1"/>
<dbReference type="EMBL" id="AE008691">
    <property type="protein sequence ID" value="AAM24173.1"/>
    <property type="molecule type" value="Genomic_DNA"/>
</dbReference>
<dbReference type="SMR" id="Q8RBA5"/>
<dbReference type="STRING" id="273068.TTE0917"/>
<dbReference type="KEGG" id="tte:TTE0917"/>
<dbReference type="eggNOG" id="COG0536">
    <property type="taxonomic scope" value="Bacteria"/>
</dbReference>
<dbReference type="HOGENOM" id="CLU_011747_2_1_9"/>
<dbReference type="Proteomes" id="UP000000555">
    <property type="component" value="Chromosome"/>
</dbReference>
<dbReference type="GO" id="GO:0005737">
    <property type="term" value="C:cytoplasm"/>
    <property type="evidence" value="ECO:0007669"/>
    <property type="project" value="UniProtKB-SubCell"/>
</dbReference>
<dbReference type="GO" id="GO:0005525">
    <property type="term" value="F:GTP binding"/>
    <property type="evidence" value="ECO:0007669"/>
    <property type="project" value="UniProtKB-UniRule"/>
</dbReference>
<dbReference type="GO" id="GO:0003924">
    <property type="term" value="F:GTPase activity"/>
    <property type="evidence" value="ECO:0007669"/>
    <property type="project" value="UniProtKB-UniRule"/>
</dbReference>
<dbReference type="GO" id="GO:0000287">
    <property type="term" value="F:magnesium ion binding"/>
    <property type="evidence" value="ECO:0007669"/>
    <property type="project" value="InterPro"/>
</dbReference>
<dbReference type="GO" id="GO:0042254">
    <property type="term" value="P:ribosome biogenesis"/>
    <property type="evidence" value="ECO:0007669"/>
    <property type="project" value="UniProtKB-UniRule"/>
</dbReference>
<dbReference type="CDD" id="cd01898">
    <property type="entry name" value="Obg"/>
    <property type="match status" value="1"/>
</dbReference>
<dbReference type="FunFam" id="2.70.210.12:FF:000001">
    <property type="entry name" value="GTPase Obg"/>
    <property type="match status" value="1"/>
</dbReference>
<dbReference type="Gene3D" id="3.30.300.350">
    <property type="entry name" value="GTP-binding protein OBG, C-terminal domain"/>
    <property type="match status" value="1"/>
</dbReference>
<dbReference type="Gene3D" id="2.70.210.12">
    <property type="entry name" value="GTP1/OBG domain"/>
    <property type="match status" value="1"/>
</dbReference>
<dbReference type="Gene3D" id="3.40.50.300">
    <property type="entry name" value="P-loop containing nucleotide triphosphate hydrolases"/>
    <property type="match status" value="1"/>
</dbReference>
<dbReference type="HAMAP" id="MF_01454">
    <property type="entry name" value="GTPase_Obg"/>
    <property type="match status" value="1"/>
</dbReference>
<dbReference type="InterPro" id="IPR031167">
    <property type="entry name" value="G_OBG"/>
</dbReference>
<dbReference type="InterPro" id="IPR006073">
    <property type="entry name" value="GTP-bd"/>
</dbReference>
<dbReference type="InterPro" id="IPR014100">
    <property type="entry name" value="GTP-bd_Obg/CgtA"/>
</dbReference>
<dbReference type="InterPro" id="IPR036346">
    <property type="entry name" value="GTP-bd_prot_GTP1/OBG_C_sf"/>
</dbReference>
<dbReference type="InterPro" id="IPR006074">
    <property type="entry name" value="GTP1-OBG_CS"/>
</dbReference>
<dbReference type="InterPro" id="IPR006169">
    <property type="entry name" value="GTP1_OBG_dom"/>
</dbReference>
<dbReference type="InterPro" id="IPR036726">
    <property type="entry name" value="GTP1_OBG_dom_sf"/>
</dbReference>
<dbReference type="InterPro" id="IPR045086">
    <property type="entry name" value="OBG_GTPase"/>
</dbReference>
<dbReference type="InterPro" id="IPR015349">
    <property type="entry name" value="OCT_dom"/>
</dbReference>
<dbReference type="InterPro" id="IPR027417">
    <property type="entry name" value="P-loop_NTPase"/>
</dbReference>
<dbReference type="InterPro" id="IPR005225">
    <property type="entry name" value="Small_GTP-bd"/>
</dbReference>
<dbReference type="NCBIfam" id="TIGR02729">
    <property type="entry name" value="Obg_CgtA"/>
    <property type="match status" value="1"/>
</dbReference>
<dbReference type="NCBIfam" id="TIGR03595">
    <property type="entry name" value="Obg_CgtA_exten"/>
    <property type="match status" value="1"/>
</dbReference>
<dbReference type="NCBIfam" id="NF008954">
    <property type="entry name" value="PRK12296.1"/>
    <property type="match status" value="1"/>
</dbReference>
<dbReference type="NCBIfam" id="NF008955">
    <property type="entry name" value="PRK12297.1"/>
    <property type="match status" value="1"/>
</dbReference>
<dbReference type="NCBIfam" id="NF008956">
    <property type="entry name" value="PRK12299.1"/>
    <property type="match status" value="1"/>
</dbReference>
<dbReference type="NCBIfam" id="TIGR00231">
    <property type="entry name" value="small_GTP"/>
    <property type="match status" value="1"/>
</dbReference>
<dbReference type="PANTHER" id="PTHR11702">
    <property type="entry name" value="DEVELOPMENTALLY REGULATED GTP-BINDING PROTEIN-RELATED"/>
    <property type="match status" value="1"/>
</dbReference>
<dbReference type="PANTHER" id="PTHR11702:SF31">
    <property type="entry name" value="MITOCHONDRIAL RIBOSOME-ASSOCIATED GTPASE 2"/>
    <property type="match status" value="1"/>
</dbReference>
<dbReference type="Pfam" id="PF09269">
    <property type="entry name" value="DUF1967"/>
    <property type="match status" value="1"/>
</dbReference>
<dbReference type="Pfam" id="PF01018">
    <property type="entry name" value="GTP1_OBG"/>
    <property type="match status" value="1"/>
</dbReference>
<dbReference type="Pfam" id="PF01926">
    <property type="entry name" value="MMR_HSR1"/>
    <property type="match status" value="1"/>
</dbReference>
<dbReference type="PIRSF" id="PIRSF002401">
    <property type="entry name" value="GTP_bd_Obg/CgtA"/>
    <property type="match status" value="1"/>
</dbReference>
<dbReference type="PRINTS" id="PR00326">
    <property type="entry name" value="GTP1OBG"/>
</dbReference>
<dbReference type="SUPFAM" id="SSF102741">
    <property type="entry name" value="Obg GTP-binding protein C-terminal domain"/>
    <property type="match status" value="1"/>
</dbReference>
<dbReference type="SUPFAM" id="SSF82051">
    <property type="entry name" value="Obg GTP-binding protein N-terminal domain"/>
    <property type="match status" value="1"/>
</dbReference>
<dbReference type="SUPFAM" id="SSF52540">
    <property type="entry name" value="P-loop containing nucleoside triphosphate hydrolases"/>
    <property type="match status" value="1"/>
</dbReference>
<dbReference type="PROSITE" id="PS51710">
    <property type="entry name" value="G_OBG"/>
    <property type="match status" value="1"/>
</dbReference>
<dbReference type="PROSITE" id="PS00905">
    <property type="entry name" value="GTP1_OBG"/>
    <property type="match status" value="1"/>
</dbReference>
<dbReference type="PROSITE" id="PS51883">
    <property type="entry name" value="OBG"/>
    <property type="match status" value="1"/>
</dbReference>
<dbReference type="PROSITE" id="PS51881">
    <property type="entry name" value="OCT"/>
    <property type="match status" value="1"/>
</dbReference>
<sequence>MVFIDTARIYIKAGDGGNGFISFRREKYVPYGGPDGGDGGKGGDVIFIADPNLSTLLDFKYKRKYIAENGENGKSKNQYGKDGEDLYIKVPVGTTIINDETGEVIADLIKPYQKAIVLKGGKGGRGNAKFATPTLKTPRFAESGEKGREMWVRLELKLLADVGLVGFPNAGKSTLLASCSRARPKIANYPFTTLTPNLGVVEHKGKSFVMADIPGLIEGAHRGEGLGHDFLRHIERTKMLIHVVDVSGSEGRDPVEDFEKINEELRLYDERLVTLPQIVAANKMDLPEGKEKYPRFEEEIKKRGYEVYPISALTKEGLDALLDKTIEILSSIPAEKIEEVPEVIVYNPPEEEETLEVEVKGNTYYLKGSKIDKLLKRINLQDEHSLRYFEILLRKSGVIDALKEKGFKSGDVINVRDFEFEYYE</sequence>
<gene>
    <name evidence="1" type="primary">obg</name>
    <name type="ordered locus">TTE0917</name>
</gene>
<reference key="1">
    <citation type="journal article" date="2002" name="Genome Res.">
        <title>A complete sequence of the T. tengcongensis genome.</title>
        <authorList>
            <person name="Bao Q."/>
            <person name="Tian Y."/>
            <person name="Li W."/>
            <person name="Xu Z."/>
            <person name="Xuan Z."/>
            <person name="Hu S."/>
            <person name="Dong W."/>
            <person name="Yang J."/>
            <person name="Chen Y."/>
            <person name="Xue Y."/>
            <person name="Xu Y."/>
            <person name="Lai X."/>
            <person name="Huang L."/>
            <person name="Dong X."/>
            <person name="Ma Y."/>
            <person name="Ling L."/>
            <person name="Tan H."/>
            <person name="Chen R."/>
            <person name="Wang J."/>
            <person name="Yu J."/>
            <person name="Yang H."/>
        </authorList>
    </citation>
    <scope>NUCLEOTIDE SEQUENCE [LARGE SCALE GENOMIC DNA]</scope>
    <source>
        <strain>DSM 15242 / JCM 11007 / NBRC 100824 / MB4</strain>
    </source>
</reference>
<feature type="chain" id="PRO_0000386348" description="GTPase Obg">
    <location>
        <begin position="1"/>
        <end position="424"/>
    </location>
</feature>
<feature type="domain" description="Obg" evidence="3">
    <location>
        <begin position="1"/>
        <end position="159"/>
    </location>
</feature>
<feature type="domain" description="OBG-type G" evidence="1">
    <location>
        <begin position="160"/>
        <end position="330"/>
    </location>
</feature>
<feature type="domain" description="OCT" evidence="2">
    <location>
        <begin position="347"/>
        <end position="424"/>
    </location>
</feature>
<feature type="binding site" evidence="1">
    <location>
        <begin position="166"/>
        <end position="173"/>
    </location>
    <ligand>
        <name>GTP</name>
        <dbReference type="ChEBI" id="CHEBI:37565"/>
    </ligand>
</feature>
<feature type="binding site" evidence="1">
    <location>
        <position position="173"/>
    </location>
    <ligand>
        <name>Mg(2+)</name>
        <dbReference type="ChEBI" id="CHEBI:18420"/>
    </ligand>
</feature>
<feature type="binding site" evidence="1">
    <location>
        <begin position="191"/>
        <end position="195"/>
    </location>
    <ligand>
        <name>GTP</name>
        <dbReference type="ChEBI" id="CHEBI:37565"/>
    </ligand>
</feature>
<feature type="binding site" evidence="1">
    <location>
        <position position="193"/>
    </location>
    <ligand>
        <name>Mg(2+)</name>
        <dbReference type="ChEBI" id="CHEBI:18420"/>
    </ligand>
</feature>
<feature type="binding site" evidence="1">
    <location>
        <begin position="212"/>
        <end position="215"/>
    </location>
    <ligand>
        <name>GTP</name>
        <dbReference type="ChEBI" id="CHEBI:37565"/>
    </ligand>
</feature>
<feature type="binding site" evidence="1">
    <location>
        <begin position="282"/>
        <end position="285"/>
    </location>
    <ligand>
        <name>GTP</name>
        <dbReference type="ChEBI" id="CHEBI:37565"/>
    </ligand>
</feature>
<feature type="binding site" evidence="1">
    <location>
        <begin position="311"/>
        <end position="313"/>
    </location>
    <ligand>
        <name>GTP</name>
        <dbReference type="ChEBI" id="CHEBI:37565"/>
    </ligand>
</feature>
<accession>Q8RBA5</accession>
<comment type="function">
    <text evidence="1">An essential GTPase which binds GTP, GDP and possibly (p)ppGpp with moderate affinity, with high nucleotide exchange rates and a fairly low GTP hydrolysis rate. Plays a role in control of the cell cycle, stress response, ribosome biogenesis and in those bacteria that undergo differentiation, in morphogenesis control.</text>
</comment>
<comment type="cofactor">
    <cofactor evidence="1">
        <name>Mg(2+)</name>
        <dbReference type="ChEBI" id="CHEBI:18420"/>
    </cofactor>
</comment>
<comment type="subunit">
    <text evidence="1">Monomer.</text>
</comment>
<comment type="subcellular location">
    <subcellularLocation>
        <location evidence="1">Cytoplasm</location>
    </subcellularLocation>
</comment>
<comment type="similarity">
    <text evidence="1">Belongs to the TRAFAC class OBG-HflX-like GTPase superfamily. OBG GTPase family.</text>
</comment>